<gene>
    <name evidence="1" type="primary">nrdR</name>
    <name type="ordered locus">CT_406</name>
</gene>
<sequence>MLCPFCNHGELKVIDSRNAPESNAIKRRRECLRCSQRFTTFETVELTVQVLKRDGRYENFQESKLVNGLKAASSHTRIGQEQVQAIASNIKQDLLGKQNREISTKEIGELVMKYLKKADMIAYIRFACVYRRFKDVGELMEVLLSATPDGEKQT</sequence>
<organism>
    <name type="scientific">Chlamydia trachomatis serovar D (strain ATCC VR-885 / DSM 19411 / UW-3/Cx)</name>
    <dbReference type="NCBI Taxonomy" id="272561"/>
    <lineage>
        <taxon>Bacteria</taxon>
        <taxon>Pseudomonadati</taxon>
        <taxon>Chlamydiota</taxon>
        <taxon>Chlamydiia</taxon>
        <taxon>Chlamydiales</taxon>
        <taxon>Chlamydiaceae</taxon>
        <taxon>Chlamydia/Chlamydophila group</taxon>
        <taxon>Chlamydia</taxon>
    </lineage>
</organism>
<proteinExistence type="inferred from homology"/>
<accession>O84411</accession>
<protein>
    <recommendedName>
        <fullName evidence="1">Transcriptional repressor NrdR</fullName>
    </recommendedName>
</protein>
<keyword id="KW-0067">ATP-binding</keyword>
<keyword id="KW-0238">DNA-binding</keyword>
<keyword id="KW-0479">Metal-binding</keyword>
<keyword id="KW-0547">Nucleotide-binding</keyword>
<keyword id="KW-1185">Reference proteome</keyword>
<keyword id="KW-0678">Repressor</keyword>
<keyword id="KW-0804">Transcription</keyword>
<keyword id="KW-0805">Transcription regulation</keyword>
<keyword id="KW-0862">Zinc</keyword>
<keyword id="KW-0863">Zinc-finger</keyword>
<reference key="1">
    <citation type="journal article" date="1998" name="Science">
        <title>Genome sequence of an obligate intracellular pathogen of humans: Chlamydia trachomatis.</title>
        <authorList>
            <person name="Stephens R.S."/>
            <person name="Kalman S."/>
            <person name="Lammel C.J."/>
            <person name="Fan J."/>
            <person name="Marathe R."/>
            <person name="Aravind L."/>
            <person name="Mitchell W.P."/>
            <person name="Olinger L."/>
            <person name="Tatusov R.L."/>
            <person name="Zhao Q."/>
            <person name="Koonin E.V."/>
            <person name="Davis R.W."/>
        </authorList>
    </citation>
    <scope>NUCLEOTIDE SEQUENCE [LARGE SCALE GENOMIC DNA]</scope>
    <source>
        <strain>ATCC VR-885 / DSM 19411 / UW-3/Cx</strain>
    </source>
</reference>
<evidence type="ECO:0000255" key="1">
    <source>
        <dbReference type="HAMAP-Rule" id="MF_00440"/>
    </source>
</evidence>
<dbReference type="EMBL" id="AE001273">
    <property type="protein sequence ID" value="AAC68003.1"/>
    <property type="molecule type" value="Genomic_DNA"/>
</dbReference>
<dbReference type="PIR" id="H71517">
    <property type="entry name" value="H71517"/>
</dbReference>
<dbReference type="RefSeq" id="NP_219916.1">
    <property type="nucleotide sequence ID" value="NC_000117.1"/>
</dbReference>
<dbReference type="RefSeq" id="WP_009871758.1">
    <property type="nucleotide sequence ID" value="NC_000117.1"/>
</dbReference>
<dbReference type="SMR" id="O84411"/>
<dbReference type="FunCoup" id="O84411">
    <property type="interactions" value="119"/>
</dbReference>
<dbReference type="STRING" id="272561.CT_406"/>
<dbReference type="EnsemblBacteria" id="AAC68003">
    <property type="protein sequence ID" value="AAC68003"/>
    <property type="gene ID" value="CT_406"/>
</dbReference>
<dbReference type="GeneID" id="884710"/>
<dbReference type="KEGG" id="ctr:CT_406"/>
<dbReference type="PATRIC" id="fig|272561.5.peg.437"/>
<dbReference type="HOGENOM" id="CLU_108412_0_0_0"/>
<dbReference type="InParanoid" id="O84411"/>
<dbReference type="OrthoDB" id="9807461at2"/>
<dbReference type="Proteomes" id="UP000000431">
    <property type="component" value="Chromosome"/>
</dbReference>
<dbReference type="GO" id="GO:0005524">
    <property type="term" value="F:ATP binding"/>
    <property type="evidence" value="ECO:0007669"/>
    <property type="project" value="UniProtKB-KW"/>
</dbReference>
<dbReference type="GO" id="GO:0003690">
    <property type="term" value="F:double-stranded DNA binding"/>
    <property type="evidence" value="ECO:0000318"/>
    <property type="project" value="GO_Central"/>
</dbReference>
<dbReference type="GO" id="GO:0008270">
    <property type="term" value="F:zinc ion binding"/>
    <property type="evidence" value="ECO:0007669"/>
    <property type="project" value="UniProtKB-UniRule"/>
</dbReference>
<dbReference type="GO" id="GO:0045892">
    <property type="term" value="P:negative regulation of DNA-templated transcription"/>
    <property type="evidence" value="ECO:0000318"/>
    <property type="project" value="GO_Central"/>
</dbReference>
<dbReference type="HAMAP" id="MF_00440">
    <property type="entry name" value="NrdR"/>
    <property type="match status" value="1"/>
</dbReference>
<dbReference type="InterPro" id="IPR005144">
    <property type="entry name" value="ATP-cone_dom"/>
</dbReference>
<dbReference type="InterPro" id="IPR055173">
    <property type="entry name" value="NrdR-like_N"/>
</dbReference>
<dbReference type="InterPro" id="IPR003796">
    <property type="entry name" value="RNR_NrdR-like"/>
</dbReference>
<dbReference type="NCBIfam" id="TIGR00244">
    <property type="entry name" value="transcriptional regulator NrdR"/>
    <property type="match status" value="1"/>
</dbReference>
<dbReference type="PANTHER" id="PTHR30455">
    <property type="entry name" value="TRANSCRIPTIONAL REPRESSOR NRDR"/>
    <property type="match status" value="1"/>
</dbReference>
<dbReference type="PANTHER" id="PTHR30455:SF2">
    <property type="entry name" value="TRANSCRIPTIONAL REPRESSOR NRDR"/>
    <property type="match status" value="1"/>
</dbReference>
<dbReference type="Pfam" id="PF03477">
    <property type="entry name" value="ATP-cone"/>
    <property type="match status" value="1"/>
</dbReference>
<dbReference type="Pfam" id="PF22811">
    <property type="entry name" value="Zn_ribbon_NrdR"/>
    <property type="match status" value="1"/>
</dbReference>
<dbReference type="PROSITE" id="PS51161">
    <property type="entry name" value="ATP_CONE"/>
    <property type="match status" value="1"/>
</dbReference>
<feature type="chain" id="PRO_0000182282" description="Transcriptional repressor NrdR">
    <location>
        <begin position="1"/>
        <end position="154"/>
    </location>
</feature>
<feature type="domain" description="ATP-cone" evidence="1">
    <location>
        <begin position="48"/>
        <end position="138"/>
    </location>
</feature>
<feature type="zinc finger region" evidence="1">
    <location>
        <begin position="3"/>
        <end position="34"/>
    </location>
</feature>
<comment type="function">
    <text evidence="1">Negatively regulates transcription of bacterial ribonucleotide reductase nrd genes and operons by binding to NrdR-boxes.</text>
</comment>
<comment type="cofactor">
    <cofactor evidence="1">
        <name>Zn(2+)</name>
        <dbReference type="ChEBI" id="CHEBI:29105"/>
    </cofactor>
    <text evidence="1">Binds 1 zinc ion.</text>
</comment>
<comment type="similarity">
    <text evidence="1">Belongs to the NrdR family.</text>
</comment>
<name>NRDR_CHLTR</name>